<gene>
    <name type="primary">AIM3</name>
    <name type="ordered locus">YBR108W</name>
    <name type="ORF">YBR0901</name>
</gene>
<accession>P38266</accession>
<accession>D6VQA7</accession>
<proteinExistence type="evidence at protein level"/>
<keyword id="KW-0472">Membrane</keyword>
<keyword id="KW-0597">Phosphoprotein</keyword>
<keyword id="KW-1185">Reference proteome</keyword>
<reference key="1">
    <citation type="journal article" date="1994" name="Yeast">
        <title>Analysis of a 70 kb region on the right arm of yeast chromosome II.</title>
        <authorList>
            <person name="Mannhaupt G."/>
            <person name="Stucka R."/>
            <person name="Ehnle S."/>
            <person name="Vetter I."/>
            <person name="Feldmann H."/>
        </authorList>
    </citation>
    <scope>NUCLEOTIDE SEQUENCE [GENOMIC DNA]</scope>
    <source>
        <strain>ATCC 204508 / S288c</strain>
    </source>
</reference>
<reference key="2">
    <citation type="journal article" date="1994" name="EMBO J.">
        <title>Complete DNA sequence of yeast chromosome II.</title>
        <authorList>
            <person name="Feldmann H."/>
            <person name="Aigle M."/>
            <person name="Aljinovic G."/>
            <person name="Andre B."/>
            <person name="Baclet M.C."/>
            <person name="Barthe C."/>
            <person name="Baur A."/>
            <person name="Becam A.-M."/>
            <person name="Biteau N."/>
            <person name="Boles E."/>
            <person name="Brandt T."/>
            <person name="Brendel M."/>
            <person name="Brueckner M."/>
            <person name="Bussereau F."/>
            <person name="Christiansen C."/>
            <person name="Contreras R."/>
            <person name="Crouzet M."/>
            <person name="Cziepluch C."/>
            <person name="Demolis N."/>
            <person name="Delaveau T."/>
            <person name="Doignon F."/>
            <person name="Domdey H."/>
            <person name="Duesterhus S."/>
            <person name="Dubois E."/>
            <person name="Dujon B."/>
            <person name="El Bakkoury M."/>
            <person name="Entian K.-D."/>
            <person name="Feuermann M."/>
            <person name="Fiers W."/>
            <person name="Fobo G.M."/>
            <person name="Fritz C."/>
            <person name="Gassenhuber J."/>
            <person name="Glansdorff N."/>
            <person name="Goffeau A."/>
            <person name="Grivell L.A."/>
            <person name="de Haan M."/>
            <person name="Hein C."/>
            <person name="Herbert C.J."/>
            <person name="Hollenberg C.P."/>
            <person name="Holmstroem K."/>
            <person name="Jacq C."/>
            <person name="Jacquet M."/>
            <person name="Jauniaux J.-C."/>
            <person name="Jonniaux J.-L."/>
            <person name="Kallesoee T."/>
            <person name="Kiesau P."/>
            <person name="Kirchrath L."/>
            <person name="Koetter P."/>
            <person name="Korol S."/>
            <person name="Liebl S."/>
            <person name="Logghe M."/>
            <person name="Lohan A.J.E."/>
            <person name="Louis E.J."/>
            <person name="Li Z.Y."/>
            <person name="Maat M.J."/>
            <person name="Mallet L."/>
            <person name="Mannhaupt G."/>
            <person name="Messenguy F."/>
            <person name="Miosga T."/>
            <person name="Molemans F."/>
            <person name="Mueller S."/>
            <person name="Nasr F."/>
            <person name="Obermaier B."/>
            <person name="Perea J."/>
            <person name="Pierard A."/>
            <person name="Piravandi E."/>
            <person name="Pohl F.M."/>
            <person name="Pohl T.M."/>
            <person name="Potier S."/>
            <person name="Proft M."/>
            <person name="Purnelle B."/>
            <person name="Ramezani Rad M."/>
            <person name="Rieger M."/>
            <person name="Rose M."/>
            <person name="Schaaff-Gerstenschlaeger I."/>
            <person name="Scherens B."/>
            <person name="Schwarzlose C."/>
            <person name="Skala J."/>
            <person name="Slonimski P.P."/>
            <person name="Smits P.H.M."/>
            <person name="Souciet J.-L."/>
            <person name="Steensma H.Y."/>
            <person name="Stucka R."/>
            <person name="Urrestarazu L.A."/>
            <person name="van der Aart Q.J.M."/>
            <person name="Van Dyck L."/>
            <person name="Vassarotti A."/>
            <person name="Vetter I."/>
            <person name="Vierendeels F."/>
            <person name="Vissers S."/>
            <person name="Wagner G."/>
            <person name="de Wergifosse P."/>
            <person name="Wolfe K.H."/>
            <person name="Zagulski M."/>
            <person name="Zimmermann F.K."/>
            <person name="Mewes H.-W."/>
            <person name="Kleine K."/>
        </authorList>
    </citation>
    <scope>NUCLEOTIDE SEQUENCE [LARGE SCALE GENOMIC DNA]</scope>
    <source>
        <strain>ATCC 204508 / S288c</strain>
    </source>
</reference>
<reference key="3">
    <citation type="journal article" date="2014" name="G3 (Bethesda)">
        <title>The reference genome sequence of Saccharomyces cerevisiae: Then and now.</title>
        <authorList>
            <person name="Engel S.R."/>
            <person name="Dietrich F.S."/>
            <person name="Fisk D.G."/>
            <person name="Binkley G."/>
            <person name="Balakrishnan R."/>
            <person name="Costanzo M.C."/>
            <person name="Dwight S.S."/>
            <person name="Hitz B.C."/>
            <person name="Karra K."/>
            <person name="Nash R.S."/>
            <person name="Weng S."/>
            <person name="Wong E.D."/>
            <person name="Lloyd P."/>
            <person name="Skrzypek M.S."/>
            <person name="Miyasato S.R."/>
            <person name="Simison M."/>
            <person name="Cherry J.M."/>
        </authorList>
    </citation>
    <scope>GENOME REANNOTATION</scope>
    <scope>SEQUENCE REVISION TO 515</scope>
    <source>
        <strain>ATCC 204508 / S288c</strain>
    </source>
</reference>
<reference key="4">
    <citation type="journal article" date="2003" name="Nature">
        <title>Sequencing and comparison of yeast species to identify genes and regulatory elements.</title>
        <authorList>
            <person name="Kellis M."/>
            <person name="Patterson N."/>
            <person name="Endrizzi M."/>
            <person name="Birren B.W."/>
            <person name="Lander E.S."/>
        </authorList>
    </citation>
    <scope>IDENTIFICATION OF FRAMESHIFT</scope>
</reference>
<reference key="5">
    <citation type="journal article" date="2005" name="J. Biol. Chem.">
        <title>Characterizing the sphingolipid signaling pathway that remediates defects associated with loss of the yeast amphiphysin-like orthologs, Rvs161p and Rvs167p.</title>
        <authorList>
            <person name="Germann M."/>
            <person name="Swain E."/>
            <person name="Bergman L."/>
            <person name="Nickels J.T. Jr."/>
        </authorList>
    </citation>
    <scope>INTERACTION WITH RVS167</scope>
    <scope>SUBCELLULAR LOCATION</scope>
</reference>
<reference key="6">
    <citation type="journal article" date="2005" name="Mol. Cell. Proteomics">
        <title>Quantitative phosphoproteomics applied to the yeast pheromone signaling pathway.</title>
        <authorList>
            <person name="Gruhler A."/>
            <person name="Olsen J.V."/>
            <person name="Mohammed S."/>
            <person name="Mortensen P."/>
            <person name="Faergeman N.J."/>
            <person name="Mann M."/>
            <person name="Jensen O.N."/>
        </authorList>
    </citation>
    <scope>IDENTIFICATION BY MASS SPECTROMETRY [LARGE SCALE ANALYSIS]</scope>
    <source>
        <strain>YAL6B</strain>
    </source>
</reference>
<reference key="7">
    <citation type="journal article" date="2007" name="Proc. Natl. Acad. Sci. U.S.A.">
        <title>Analysis of phosphorylation sites on proteins from Saccharomyces cerevisiae by electron transfer dissociation (ETD) mass spectrometry.</title>
        <authorList>
            <person name="Chi A."/>
            <person name="Huttenhower C."/>
            <person name="Geer L.Y."/>
            <person name="Coon J.J."/>
            <person name="Syka J.E.P."/>
            <person name="Bai D.L."/>
            <person name="Shabanowitz J."/>
            <person name="Burke D.J."/>
            <person name="Troyanskaya O.G."/>
            <person name="Hunt D.F."/>
        </authorList>
    </citation>
    <scope>PHOSPHORYLATION [LARGE SCALE ANALYSIS] AT THR-729</scope>
    <scope>IDENTIFICATION BY MASS SPECTROMETRY [LARGE SCALE ANALYSIS]</scope>
</reference>
<reference key="8">
    <citation type="journal article" date="2008" name="Mol. Cell. Proteomics">
        <title>A multidimensional chromatography technology for in-depth phosphoproteome analysis.</title>
        <authorList>
            <person name="Albuquerque C.P."/>
            <person name="Smolka M.B."/>
            <person name="Payne S.H."/>
            <person name="Bafna V."/>
            <person name="Eng J."/>
            <person name="Zhou H."/>
        </authorList>
    </citation>
    <scope>PHOSPHORYLATION [LARGE SCALE ANALYSIS] AT SER-476; THR-729 AND THR-861</scope>
    <scope>IDENTIFICATION BY MASS SPECTROMETRY [LARGE SCALE ANALYSIS]</scope>
</reference>
<reference key="9">
    <citation type="journal article" date="2009" name="PLoS Genet.">
        <title>Computationally driven, quantitative experiments discover genes required for mitochondrial biogenesis.</title>
        <authorList>
            <person name="Hess D.C."/>
            <person name="Myers C.L."/>
            <person name="Huttenhower C."/>
            <person name="Hibbs M.A."/>
            <person name="Hayes A.P."/>
            <person name="Paw J."/>
            <person name="Clore J.J."/>
            <person name="Mendoza R.M."/>
            <person name="Luis B.S."/>
            <person name="Nislow C."/>
            <person name="Giaever G."/>
            <person name="Costanzo M."/>
            <person name="Troyanskaya O.G."/>
            <person name="Caudy A.A."/>
        </authorList>
    </citation>
    <scope>DISRUPTION PHENOTYPE</scope>
</reference>
<reference key="10">
    <citation type="journal article" date="2009" name="Science">
        <title>Global analysis of Cdk1 substrate phosphorylation sites provides insights into evolution.</title>
        <authorList>
            <person name="Holt L.J."/>
            <person name="Tuch B.B."/>
            <person name="Villen J."/>
            <person name="Johnson A.D."/>
            <person name="Gygi S.P."/>
            <person name="Morgan D.O."/>
        </authorList>
    </citation>
    <scope>PHOSPHORYLATION [LARGE SCALE ANALYSIS] AT SER-57; SER-58 AND SER-64</scope>
    <scope>IDENTIFICATION BY MASS SPECTROMETRY [LARGE SCALE ANALYSIS]</scope>
</reference>
<organism>
    <name type="scientific">Saccharomyces cerevisiae (strain ATCC 204508 / S288c)</name>
    <name type="common">Baker's yeast</name>
    <dbReference type="NCBI Taxonomy" id="559292"/>
    <lineage>
        <taxon>Eukaryota</taxon>
        <taxon>Fungi</taxon>
        <taxon>Dikarya</taxon>
        <taxon>Ascomycota</taxon>
        <taxon>Saccharomycotina</taxon>
        <taxon>Saccharomycetes</taxon>
        <taxon>Saccharomycetales</taxon>
        <taxon>Saccharomycetaceae</taxon>
        <taxon>Saccharomyces</taxon>
    </lineage>
</organism>
<name>AIM3_YEAST</name>
<evidence type="ECO:0000256" key="1">
    <source>
        <dbReference type="SAM" id="MobiDB-lite"/>
    </source>
</evidence>
<evidence type="ECO:0000269" key="2">
    <source>
    </source>
</evidence>
<evidence type="ECO:0000269" key="3">
    <source>
    </source>
</evidence>
<evidence type="ECO:0000305" key="4"/>
<evidence type="ECO:0007744" key="5">
    <source>
    </source>
</evidence>
<evidence type="ECO:0007744" key="6">
    <source>
    </source>
</evidence>
<evidence type="ECO:0007744" key="7">
    <source>
    </source>
</evidence>
<protein>
    <recommendedName>
        <fullName>Altered inheritance of mitochondria protein 3</fullName>
    </recommendedName>
</protein>
<feature type="chain" id="PRO_0000202486" description="Altered inheritance of mitochondria protein 3">
    <location>
        <begin position="1"/>
        <end position="947"/>
    </location>
</feature>
<feature type="region of interest" description="Disordered" evidence="1">
    <location>
        <begin position="1"/>
        <end position="334"/>
    </location>
</feature>
<feature type="region of interest" description="Disordered" evidence="1">
    <location>
        <begin position="354"/>
        <end position="810"/>
    </location>
</feature>
<feature type="region of interest" description="Disordered" evidence="1">
    <location>
        <begin position="824"/>
        <end position="904"/>
    </location>
</feature>
<feature type="compositionally biased region" description="Basic residues" evidence="1">
    <location>
        <begin position="36"/>
        <end position="54"/>
    </location>
</feature>
<feature type="compositionally biased region" description="Acidic residues" evidence="1">
    <location>
        <begin position="59"/>
        <end position="69"/>
    </location>
</feature>
<feature type="compositionally biased region" description="Basic and acidic residues" evidence="1">
    <location>
        <begin position="70"/>
        <end position="84"/>
    </location>
</feature>
<feature type="compositionally biased region" description="Low complexity" evidence="1">
    <location>
        <begin position="93"/>
        <end position="105"/>
    </location>
</feature>
<feature type="compositionally biased region" description="Low complexity" evidence="1">
    <location>
        <begin position="130"/>
        <end position="163"/>
    </location>
</feature>
<feature type="compositionally biased region" description="Polar residues" evidence="1">
    <location>
        <begin position="177"/>
        <end position="255"/>
    </location>
</feature>
<feature type="compositionally biased region" description="Low complexity" evidence="1">
    <location>
        <begin position="256"/>
        <end position="289"/>
    </location>
</feature>
<feature type="compositionally biased region" description="Low complexity" evidence="1">
    <location>
        <begin position="313"/>
        <end position="334"/>
    </location>
</feature>
<feature type="compositionally biased region" description="Polar residues" evidence="1">
    <location>
        <begin position="354"/>
        <end position="367"/>
    </location>
</feature>
<feature type="compositionally biased region" description="Pro residues" evidence="1">
    <location>
        <begin position="379"/>
        <end position="395"/>
    </location>
</feature>
<feature type="compositionally biased region" description="Polar residues" evidence="1">
    <location>
        <begin position="466"/>
        <end position="475"/>
    </location>
</feature>
<feature type="compositionally biased region" description="Basic and acidic residues" evidence="1">
    <location>
        <begin position="488"/>
        <end position="502"/>
    </location>
</feature>
<feature type="compositionally biased region" description="Polar residues" evidence="1">
    <location>
        <begin position="633"/>
        <end position="644"/>
    </location>
</feature>
<feature type="compositionally biased region" description="Low complexity" evidence="1">
    <location>
        <begin position="667"/>
        <end position="676"/>
    </location>
</feature>
<feature type="compositionally biased region" description="Basic and acidic residues" evidence="1">
    <location>
        <begin position="749"/>
        <end position="759"/>
    </location>
</feature>
<feature type="compositionally biased region" description="Polar residues" evidence="1">
    <location>
        <begin position="763"/>
        <end position="774"/>
    </location>
</feature>
<feature type="compositionally biased region" description="Pro residues" evidence="1">
    <location>
        <begin position="862"/>
        <end position="879"/>
    </location>
</feature>
<feature type="compositionally biased region" description="Basic residues" evidence="1">
    <location>
        <begin position="888"/>
        <end position="899"/>
    </location>
</feature>
<feature type="modified residue" description="Phosphoserine" evidence="7">
    <location>
        <position position="57"/>
    </location>
</feature>
<feature type="modified residue" description="Phosphoserine" evidence="7">
    <location>
        <position position="58"/>
    </location>
</feature>
<feature type="modified residue" description="Phosphoserine" evidence="7">
    <location>
        <position position="64"/>
    </location>
</feature>
<feature type="modified residue" description="Phosphoserine" evidence="6">
    <location>
        <position position="476"/>
    </location>
</feature>
<feature type="modified residue" description="Phosphothreonine" evidence="5 6">
    <location>
        <position position="729"/>
    </location>
</feature>
<feature type="modified residue" description="Phosphothreonine" evidence="6">
    <location>
        <position position="861"/>
    </location>
</feature>
<feature type="sequence conflict" description="In Ref. 1; CAA55611 and 2; CAA85063." evidence="4" ref="1 2">
    <original>V</original>
    <variation>A</variation>
    <location>
        <position position="515"/>
    </location>
</feature>
<sequence length="947" mass="103863">MGFWENNKDSITSGLKSAGKYGYQGTKYVAKTGYKASKKHYNNSKARRERKSGKKNSSDEEYDSEDEMEYERKPTDIRSLKDPKSFPPPPLKPGQKTYTGQQQQQMPNGQASYAFQGAYQGQPGAGSTEQSQYAQPQYNQYPQQQLQQGVMPQQQQLQQGVVPQQPPIYGEQVPPYGSNSNATSYQSLPQQNQPQNAIPSQVSLNSASQQSTGFVSQNLQYGTQSSNPAPSPSFQNGLQCHQQPQYVSHGSTNLGQSQFPSGQQQQPTTQFGQQVLPSPAQPQQQQQGQPLPPPRGQVILPAPGEPLSNGFGQQQQQQQQQQQPLNQNNALLPQMNVEGVSGMAAVQPVYGQAMSSTTNMQDSNPSYGASPMQGQPPVGGQPPVPVRMQPQPPQPMQQGNIYPIEPSLDSTGSTPHFEVTPFDPDAPAPKPKIDIPTVDVSSLPPPPTHRDRGAVVHQEPAPSGKIQPNTTSSAASLPAKHSRTTTADNERNSGNKENDESTSKSSILGHYDVDVNIMPPPKPFRHGLDSVPSEHTTKNAPERAVPILPPRNNVEPPPPPSRGNFERTESVLSTNAANVQEDPISNFLPPPKPFRHTETKQNQNSKASPVEMKGEVLPGHPSEEDRNVEPSLVPQSKPQSQSQFRRAHMETQPIQNFQPPPKPFRRSQSSNSSDSSYTIDGPEANHGRGRGRIAKHHDGDEYNPKSENSTENGRLGDAPNSFIRKRAPTPPAPSRSEKLHEGTITSEVDSSKDANKYEKSIPPVTSSIQAQQSTKKAPPPVVKPKPRNFSLKANEYPKELTREATGQDEVLNSITNELSHIKLRKTNVNLEKLGGSKKVKDSSPVPSDLDEKYVSASGSITPPRPPPSRSSPKKVPPVVPKKNDNLKKKPPVVPKKKPLLKSLEPRPIEMERAYSGDISAADDNLNPFERYKRNVVPQEDDRLHKLK</sequence>
<dbReference type="EMBL" id="X78993">
    <property type="protein sequence ID" value="CAA55611.1"/>
    <property type="status" value="ALT_FRAME"/>
    <property type="molecule type" value="Genomic_DNA"/>
</dbReference>
<dbReference type="EMBL" id="Z35977">
    <property type="protein sequence ID" value="CAA85063.1"/>
    <property type="status" value="ALT_FRAME"/>
    <property type="molecule type" value="Genomic_DNA"/>
</dbReference>
<dbReference type="EMBL" id="BK006936">
    <property type="protein sequence ID" value="DAA07227.2"/>
    <property type="molecule type" value="Genomic_DNA"/>
</dbReference>
<dbReference type="PIR" id="S48273">
    <property type="entry name" value="S48273"/>
</dbReference>
<dbReference type="RefSeq" id="NP_009666.3">
    <property type="nucleotide sequence ID" value="NM_001178456.2"/>
</dbReference>
<dbReference type="SMR" id="P38266"/>
<dbReference type="BioGRID" id="32812">
    <property type="interactions" value="206"/>
</dbReference>
<dbReference type="DIP" id="DIP-1602N"/>
<dbReference type="FunCoup" id="P38266">
    <property type="interactions" value="72"/>
</dbReference>
<dbReference type="IntAct" id="P38266">
    <property type="interactions" value="16"/>
</dbReference>
<dbReference type="MINT" id="P38266"/>
<dbReference type="STRING" id="4932.YBR108W"/>
<dbReference type="GlyGen" id="P38266">
    <property type="glycosylation" value="6 sites, 1 O-linked glycan (5 sites)"/>
</dbReference>
<dbReference type="iPTMnet" id="P38266"/>
<dbReference type="PaxDb" id="4932-YBR108W"/>
<dbReference type="PeptideAtlas" id="P38266"/>
<dbReference type="EnsemblFungi" id="YBR108W_mRNA">
    <property type="protein sequence ID" value="YBR108W"/>
    <property type="gene ID" value="YBR108W"/>
</dbReference>
<dbReference type="GeneID" id="852405"/>
<dbReference type="KEGG" id="sce:YBR108W"/>
<dbReference type="AGR" id="SGD:S000000312"/>
<dbReference type="SGD" id="S000000312">
    <property type="gene designation" value="AIM3"/>
</dbReference>
<dbReference type="VEuPathDB" id="FungiDB:YBR108W"/>
<dbReference type="eggNOG" id="ENOG502S02E">
    <property type="taxonomic scope" value="Eukaryota"/>
</dbReference>
<dbReference type="HOGENOM" id="CLU_324433_0_0_1"/>
<dbReference type="InParanoid" id="P38266"/>
<dbReference type="OMA" id="DNPFRRY"/>
<dbReference type="OrthoDB" id="3973404at2759"/>
<dbReference type="BioCyc" id="YEAST:G3O-29070-MONOMER"/>
<dbReference type="BioGRID-ORCS" id="852405">
    <property type="hits" value="10 hits in 10 CRISPR screens"/>
</dbReference>
<dbReference type="PRO" id="PR:P38266"/>
<dbReference type="Proteomes" id="UP000002311">
    <property type="component" value="Chromosome II"/>
</dbReference>
<dbReference type="RNAct" id="P38266">
    <property type="molecule type" value="protein"/>
</dbReference>
<dbReference type="GO" id="GO:0030479">
    <property type="term" value="C:actin cortical patch"/>
    <property type="evidence" value="ECO:0000314"/>
    <property type="project" value="SGD"/>
</dbReference>
<dbReference type="GO" id="GO:0045121">
    <property type="term" value="C:membrane raft"/>
    <property type="evidence" value="ECO:0000314"/>
    <property type="project" value="SGD"/>
</dbReference>
<dbReference type="GO" id="GO:0000147">
    <property type="term" value="P:actin cortical patch assembly"/>
    <property type="evidence" value="ECO:0000316"/>
    <property type="project" value="SGD"/>
</dbReference>
<dbReference type="GO" id="GO:0051016">
    <property type="term" value="P:barbed-end actin filament capping"/>
    <property type="evidence" value="ECO:0000315"/>
    <property type="project" value="SGD"/>
</dbReference>
<dbReference type="InterPro" id="IPR031370">
    <property type="entry name" value="Aim3"/>
</dbReference>
<dbReference type="Pfam" id="PF17096">
    <property type="entry name" value="AIM3"/>
    <property type="match status" value="1"/>
</dbReference>
<comment type="subunit">
    <text evidence="2">Interacts with RVS167.</text>
</comment>
<comment type="interaction">
    <interactant intactId="EBI-21584">
        <id>P38266</id>
    </interactant>
    <interactant intactId="EBI-2036">
        <id>P15891</id>
        <label>ABP1</label>
    </interactant>
    <organismsDiffer>false</organismsDiffer>
    <experiments>2</experiments>
</comment>
<comment type="interaction">
    <interactant intactId="EBI-21584">
        <id>P38266</id>
    </interactant>
    <interactant intactId="EBI-3889">
        <id>P38822</id>
        <label>BZZ1</label>
    </interactant>
    <organismsDiffer>false</organismsDiffer>
    <experiments>2</experiments>
</comment>
<comment type="interaction">
    <interactant intactId="EBI-21584">
        <id>P38266</id>
    </interactant>
    <interactant intactId="EBI-23329">
        <id>P53281</id>
        <label>LSB1</label>
    </interactant>
    <organismsDiffer>false</organismsDiffer>
    <experiments>3</experiments>
</comment>
<comment type="interaction">
    <interactant intactId="EBI-21584">
        <id>P38266</id>
    </interactant>
    <interactant intactId="EBI-22980">
        <id>P43603</id>
        <label>LSB3</label>
    </interactant>
    <organismsDiffer>false</organismsDiffer>
    <experiments>4</experiments>
</comment>
<comment type="interaction">
    <interactant intactId="EBI-21584">
        <id>P38266</id>
    </interactant>
    <interactant intactId="EBI-14500">
        <id>P39743</id>
        <label>RVS167</label>
    </interactant>
    <organismsDiffer>false</organismsDiffer>
    <experiments>6</experiments>
</comment>
<comment type="interaction">
    <interactant intactId="EBI-21584">
        <id>P38266</id>
    </interactant>
    <interactant intactId="EBI-24460">
        <id>P32793</id>
        <label>YSC84</label>
    </interactant>
    <organismsDiffer>false</organismsDiffer>
    <experiments>5</experiments>
</comment>
<comment type="subcellular location">
    <subcellularLocation>
        <location evidence="2">Membrane raft</location>
        <topology evidence="2">Peripheral membrane protein</topology>
    </subcellularLocation>
    <text>Localize within detergent-insoluble glycolipid-enriched membranes.</text>
</comment>
<comment type="disruption phenotype">
    <text evidence="3">Increases frequency of mitochondrial genome loss.</text>
</comment>
<comment type="similarity">
    <text evidence="4">Belongs to the AIM3 family.</text>
</comment>
<comment type="sequence caution" evidence="4">
    <conflict type="frameshift">
        <sequence resource="EMBL-CDS" id="CAA55611"/>
    </conflict>
</comment>
<comment type="sequence caution" evidence="4">
    <conflict type="frameshift">
        <sequence resource="EMBL-CDS" id="CAA85063"/>
    </conflict>
</comment>